<reference key="1">
    <citation type="journal article" date="2008" name="J. Bacteriol.">
        <title>The pangenome structure of Escherichia coli: comparative genomic analysis of E. coli commensal and pathogenic isolates.</title>
        <authorList>
            <person name="Rasko D.A."/>
            <person name="Rosovitz M.J."/>
            <person name="Myers G.S.A."/>
            <person name="Mongodin E.F."/>
            <person name="Fricke W.F."/>
            <person name="Gajer P."/>
            <person name="Crabtree J."/>
            <person name="Sebaihia M."/>
            <person name="Thomson N.R."/>
            <person name="Chaudhuri R."/>
            <person name="Henderson I.R."/>
            <person name="Sperandio V."/>
            <person name="Ravel J."/>
        </authorList>
    </citation>
    <scope>NUCLEOTIDE SEQUENCE [LARGE SCALE GENOMIC DNA]</scope>
    <source>
        <strain>E24377A / ETEC</strain>
    </source>
</reference>
<feature type="chain" id="PRO_1000065538" description="DnaA initiator-associating protein DiaA">
    <location>
        <begin position="1"/>
        <end position="196"/>
    </location>
</feature>
<feature type="domain" description="SIS" evidence="1">
    <location>
        <begin position="34"/>
        <end position="196"/>
    </location>
</feature>
<organism>
    <name type="scientific">Escherichia coli O139:H28 (strain E24377A / ETEC)</name>
    <dbReference type="NCBI Taxonomy" id="331111"/>
    <lineage>
        <taxon>Bacteria</taxon>
        <taxon>Pseudomonadati</taxon>
        <taxon>Pseudomonadota</taxon>
        <taxon>Gammaproteobacteria</taxon>
        <taxon>Enterobacterales</taxon>
        <taxon>Enterobacteriaceae</taxon>
        <taxon>Escherichia</taxon>
    </lineage>
</organism>
<name>DIAA_ECO24</name>
<protein>
    <recommendedName>
        <fullName evidence="1">DnaA initiator-associating protein DiaA</fullName>
    </recommendedName>
</protein>
<gene>
    <name evidence="1" type="primary">diaA</name>
    <name type="ordered locus">EcE24377A_3631</name>
</gene>
<comment type="function">
    <text evidence="1">Required for the timely initiation of chromosomal replication via direct interactions with the DnaA initiator protein.</text>
</comment>
<comment type="subunit">
    <text evidence="1">Homotetramer; dimer of dimers.</text>
</comment>
<comment type="similarity">
    <text evidence="1">Belongs to the SIS family. DiaA subfamily.</text>
</comment>
<dbReference type="EMBL" id="CP000800">
    <property type="protein sequence ID" value="ABV16993.1"/>
    <property type="molecule type" value="Genomic_DNA"/>
</dbReference>
<dbReference type="RefSeq" id="WP_001158035.1">
    <property type="nucleotide sequence ID" value="NC_009801.1"/>
</dbReference>
<dbReference type="SMR" id="A7ZS45"/>
<dbReference type="GeneID" id="75206004"/>
<dbReference type="KEGG" id="ecw:EcE24377A_3631"/>
<dbReference type="HOGENOM" id="CLU_080999_3_1_6"/>
<dbReference type="Proteomes" id="UP000001122">
    <property type="component" value="Chromosome"/>
</dbReference>
<dbReference type="GO" id="GO:0097367">
    <property type="term" value="F:carbohydrate derivative binding"/>
    <property type="evidence" value="ECO:0007669"/>
    <property type="project" value="InterPro"/>
</dbReference>
<dbReference type="GO" id="GO:1901135">
    <property type="term" value="P:carbohydrate derivative metabolic process"/>
    <property type="evidence" value="ECO:0007669"/>
    <property type="project" value="InterPro"/>
</dbReference>
<dbReference type="GO" id="GO:0006260">
    <property type="term" value="P:DNA replication"/>
    <property type="evidence" value="ECO:0007669"/>
    <property type="project" value="UniProtKB-UniRule"/>
</dbReference>
<dbReference type="CDD" id="cd05006">
    <property type="entry name" value="SIS_GmhA"/>
    <property type="match status" value="1"/>
</dbReference>
<dbReference type="FunFam" id="3.40.50.10490:FF:000006">
    <property type="entry name" value="DnaA initiator-associating protein DiaA"/>
    <property type="match status" value="1"/>
</dbReference>
<dbReference type="Gene3D" id="3.40.50.10490">
    <property type="entry name" value="Glucose-6-phosphate isomerase like protein, domain 1"/>
    <property type="match status" value="1"/>
</dbReference>
<dbReference type="HAMAP" id="MF_01157">
    <property type="entry name" value="SIS_DiaA"/>
    <property type="match status" value="1"/>
</dbReference>
<dbReference type="InterPro" id="IPR023070">
    <property type="entry name" value="DiaA"/>
</dbReference>
<dbReference type="InterPro" id="IPR035461">
    <property type="entry name" value="GmhA/DiaA"/>
</dbReference>
<dbReference type="InterPro" id="IPR001347">
    <property type="entry name" value="SIS_dom"/>
</dbReference>
<dbReference type="InterPro" id="IPR046348">
    <property type="entry name" value="SIS_dom_sf"/>
</dbReference>
<dbReference type="InterPro" id="IPR050099">
    <property type="entry name" value="SIS_GmhA/DiaA_subfam"/>
</dbReference>
<dbReference type="NCBIfam" id="NF008138">
    <property type="entry name" value="PRK10886.1"/>
    <property type="match status" value="1"/>
</dbReference>
<dbReference type="NCBIfam" id="NF010546">
    <property type="entry name" value="PRK13936.1"/>
    <property type="match status" value="1"/>
</dbReference>
<dbReference type="PANTHER" id="PTHR30390:SF6">
    <property type="entry name" value="DNAA INITIATOR-ASSOCIATING PROTEIN DIAA"/>
    <property type="match status" value="1"/>
</dbReference>
<dbReference type="PANTHER" id="PTHR30390">
    <property type="entry name" value="SEDOHEPTULOSE 7-PHOSPHATE ISOMERASE / DNAA INITIATOR-ASSOCIATING FACTOR FOR REPLICATION INITIATION"/>
    <property type="match status" value="1"/>
</dbReference>
<dbReference type="Pfam" id="PF13580">
    <property type="entry name" value="SIS_2"/>
    <property type="match status" value="1"/>
</dbReference>
<dbReference type="SUPFAM" id="SSF53697">
    <property type="entry name" value="SIS domain"/>
    <property type="match status" value="1"/>
</dbReference>
<dbReference type="PROSITE" id="PS51464">
    <property type="entry name" value="SIS"/>
    <property type="match status" value="1"/>
</dbReference>
<keyword id="KW-0235">DNA replication</keyword>
<keyword id="KW-1185">Reference proteome</keyword>
<evidence type="ECO:0000255" key="1">
    <source>
        <dbReference type="HAMAP-Rule" id="MF_01157"/>
    </source>
</evidence>
<accession>A7ZS45</accession>
<proteinExistence type="inferred from homology"/>
<sequence length="196" mass="21090">MQERIKACFTESIQTQIAAAEALPDAISRAAMTLVQSLLNGNKILCCGNGTSAANAQHFAASMINRFETERPSLPAIALNTDNVVLTAIANDRLHDEVYAKQVRALGHAGDVLLAISTRGNSRDIVKAVEAAVTRDMTIVALTGYDGGELAGLLGPQDVEIRIPSHRSARIQEMHMLTVNCLCDLIDNTLFPHQDV</sequence>